<accession>B9KP40</accession>
<feature type="chain" id="PRO_1000118863" description="4-hydroxy-tetrahydrodipicolinate reductase">
    <location>
        <begin position="1"/>
        <end position="269"/>
    </location>
</feature>
<feature type="active site" description="Proton donor/acceptor" evidence="1">
    <location>
        <position position="158"/>
    </location>
</feature>
<feature type="active site" description="Proton donor" evidence="1">
    <location>
        <position position="162"/>
    </location>
</feature>
<feature type="binding site" evidence="1">
    <location>
        <begin position="11"/>
        <end position="16"/>
    </location>
    <ligand>
        <name>NAD(+)</name>
        <dbReference type="ChEBI" id="CHEBI:57540"/>
    </ligand>
</feature>
<feature type="binding site" evidence="1">
    <location>
        <position position="37"/>
    </location>
    <ligand>
        <name>NAD(+)</name>
        <dbReference type="ChEBI" id="CHEBI:57540"/>
    </ligand>
</feature>
<feature type="binding site" evidence="1">
    <location>
        <position position="38"/>
    </location>
    <ligand>
        <name>NADP(+)</name>
        <dbReference type="ChEBI" id="CHEBI:58349"/>
    </ligand>
</feature>
<feature type="binding site" evidence="1">
    <location>
        <begin position="101"/>
        <end position="103"/>
    </location>
    <ligand>
        <name>NAD(+)</name>
        <dbReference type="ChEBI" id="CHEBI:57540"/>
    </ligand>
</feature>
<feature type="binding site" evidence="1">
    <location>
        <begin position="125"/>
        <end position="128"/>
    </location>
    <ligand>
        <name>NAD(+)</name>
        <dbReference type="ChEBI" id="CHEBI:57540"/>
    </ligand>
</feature>
<feature type="binding site" evidence="1">
    <location>
        <position position="159"/>
    </location>
    <ligand>
        <name>(S)-2,3,4,5-tetrahydrodipicolinate</name>
        <dbReference type="ChEBI" id="CHEBI:16845"/>
    </ligand>
</feature>
<feature type="binding site" evidence="1">
    <location>
        <begin position="168"/>
        <end position="169"/>
    </location>
    <ligand>
        <name>(S)-2,3,4,5-tetrahydrodipicolinate</name>
        <dbReference type="ChEBI" id="CHEBI:16845"/>
    </ligand>
</feature>
<comment type="function">
    <text evidence="1">Catalyzes the conversion of 4-hydroxy-tetrahydrodipicolinate (HTPA) to tetrahydrodipicolinate.</text>
</comment>
<comment type="catalytic activity">
    <reaction evidence="1">
        <text>(S)-2,3,4,5-tetrahydrodipicolinate + NAD(+) + H2O = (2S,4S)-4-hydroxy-2,3,4,5-tetrahydrodipicolinate + NADH + H(+)</text>
        <dbReference type="Rhea" id="RHEA:35323"/>
        <dbReference type="ChEBI" id="CHEBI:15377"/>
        <dbReference type="ChEBI" id="CHEBI:15378"/>
        <dbReference type="ChEBI" id="CHEBI:16845"/>
        <dbReference type="ChEBI" id="CHEBI:57540"/>
        <dbReference type="ChEBI" id="CHEBI:57945"/>
        <dbReference type="ChEBI" id="CHEBI:67139"/>
        <dbReference type="EC" id="1.17.1.8"/>
    </reaction>
</comment>
<comment type="catalytic activity">
    <reaction evidence="1">
        <text>(S)-2,3,4,5-tetrahydrodipicolinate + NADP(+) + H2O = (2S,4S)-4-hydroxy-2,3,4,5-tetrahydrodipicolinate + NADPH + H(+)</text>
        <dbReference type="Rhea" id="RHEA:35331"/>
        <dbReference type="ChEBI" id="CHEBI:15377"/>
        <dbReference type="ChEBI" id="CHEBI:15378"/>
        <dbReference type="ChEBI" id="CHEBI:16845"/>
        <dbReference type="ChEBI" id="CHEBI:57783"/>
        <dbReference type="ChEBI" id="CHEBI:58349"/>
        <dbReference type="ChEBI" id="CHEBI:67139"/>
        <dbReference type="EC" id="1.17.1.8"/>
    </reaction>
</comment>
<comment type="pathway">
    <text evidence="1">Amino-acid biosynthesis; L-lysine biosynthesis via DAP pathway; (S)-tetrahydrodipicolinate from L-aspartate: step 4/4.</text>
</comment>
<comment type="subcellular location">
    <subcellularLocation>
        <location evidence="1">Cytoplasm</location>
    </subcellularLocation>
</comment>
<comment type="similarity">
    <text evidence="1">Belongs to the DapB family.</text>
</comment>
<comment type="caution">
    <text evidence="2">Was originally thought to be a dihydrodipicolinate reductase (DHDPR), catalyzing the conversion of dihydrodipicolinate to tetrahydrodipicolinate. However, it was shown in E.coli that the substrate of the enzymatic reaction is not dihydrodipicolinate (DHDP) but in fact (2S,4S)-4-hydroxy-2,3,4,5-tetrahydrodipicolinic acid (HTPA), the product released by the DapA-catalyzed reaction.</text>
</comment>
<proteinExistence type="inferred from homology"/>
<gene>
    <name evidence="1" type="primary">dapB</name>
    <name type="ordered locus">RSKD131_2502</name>
</gene>
<organism>
    <name type="scientific">Cereibacter sphaeroides (strain KD131 / KCTC 12085)</name>
    <name type="common">Rhodobacter sphaeroides</name>
    <dbReference type="NCBI Taxonomy" id="557760"/>
    <lineage>
        <taxon>Bacteria</taxon>
        <taxon>Pseudomonadati</taxon>
        <taxon>Pseudomonadota</taxon>
        <taxon>Alphaproteobacteria</taxon>
        <taxon>Rhodobacterales</taxon>
        <taxon>Paracoccaceae</taxon>
        <taxon>Cereibacter</taxon>
    </lineage>
</organism>
<name>DAPB_CERSK</name>
<sequence length="269" mass="27976">MSDLPGIVVTGASGRMGQMLMKTVLASGRARLVGAVERPGSDWVGRDAGAAMGGAAIGVTVTDDPLAAFAQAQAVIDFTAPEATVQFAELAAQARAVHVIGTTGLEPAHLERLAWAAHHAVIVRAGNMSLGVNLLTRLTQKVAEALDEDWDIEVVEAHHRMKVDAPSGTALMLGEAAARGRGVDLAQARVSGRDGITGPRAPGSIGFSAIRGGDIVGEHDVIFAAAGERITLRHVATDRAIFARGALKAALWGQDRRPGQYDMMDVLGL</sequence>
<dbReference type="EC" id="1.17.1.8" evidence="1"/>
<dbReference type="EMBL" id="CP001150">
    <property type="protein sequence ID" value="ACM02362.1"/>
    <property type="molecule type" value="Genomic_DNA"/>
</dbReference>
<dbReference type="RefSeq" id="WP_009563154.1">
    <property type="nucleotide sequence ID" value="NC_011963.1"/>
</dbReference>
<dbReference type="SMR" id="B9KP40"/>
<dbReference type="GeneID" id="67447880"/>
<dbReference type="KEGG" id="rsk:RSKD131_2502"/>
<dbReference type="HOGENOM" id="CLU_047479_2_1_5"/>
<dbReference type="UniPathway" id="UPA00034">
    <property type="reaction ID" value="UER00018"/>
</dbReference>
<dbReference type="GO" id="GO:0005829">
    <property type="term" value="C:cytosol"/>
    <property type="evidence" value="ECO:0007669"/>
    <property type="project" value="TreeGrafter"/>
</dbReference>
<dbReference type="GO" id="GO:0008839">
    <property type="term" value="F:4-hydroxy-tetrahydrodipicolinate reductase"/>
    <property type="evidence" value="ECO:0007669"/>
    <property type="project" value="UniProtKB-EC"/>
</dbReference>
<dbReference type="GO" id="GO:0051287">
    <property type="term" value="F:NAD binding"/>
    <property type="evidence" value="ECO:0007669"/>
    <property type="project" value="UniProtKB-UniRule"/>
</dbReference>
<dbReference type="GO" id="GO:0050661">
    <property type="term" value="F:NADP binding"/>
    <property type="evidence" value="ECO:0007669"/>
    <property type="project" value="UniProtKB-UniRule"/>
</dbReference>
<dbReference type="GO" id="GO:0016726">
    <property type="term" value="F:oxidoreductase activity, acting on CH or CH2 groups, NAD or NADP as acceptor"/>
    <property type="evidence" value="ECO:0007669"/>
    <property type="project" value="UniProtKB-UniRule"/>
</dbReference>
<dbReference type="GO" id="GO:0019877">
    <property type="term" value="P:diaminopimelate biosynthetic process"/>
    <property type="evidence" value="ECO:0007669"/>
    <property type="project" value="UniProtKB-UniRule"/>
</dbReference>
<dbReference type="GO" id="GO:0009089">
    <property type="term" value="P:lysine biosynthetic process via diaminopimelate"/>
    <property type="evidence" value="ECO:0007669"/>
    <property type="project" value="UniProtKB-UniRule"/>
</dbReference>
<dbReference type="CDD" id="cd02274">
    <property type="entry name" value="DHDPR_N"/>
    <property type="match status" value="1"/>
</dbReference>
<dbReference type="FunFam" id="3.30.360.10:FF:000004">
    <property type="entry name" value="4-hydroxy-tetrahydrodipicolinate reductase"/>
    <property type="match status" value="1"/>
</dbReference>
<dbReference type="Gene3D" id="3.30.360.10">
    <property type="entry name" value="Dihydrodipicolinate Reductase, domain 2"/>
    <property type="match status" value="1"/>
</dbReference>
<dbReference type="Gene3D" id="3.40.50.720">
    <property type="entry name" value="NAD(P)-binding Rossmann-like Domain"/>
    <property type="match status" value="1"/>
</dbReference>
<dbReference type="HAMAP" id="MF_00102">
    <property type="entry name" value="DapB"/>
    <property type="match status" value="1"/>
</dbReference>
<dbReference type="InterPro" id="IPR022663">
    <property type="entry name" value="DapB_C"/>
</dbReference>
<dbReference type="InterPro" id="IPR000846">
    <property type="entry name" value="DapB_N"/>
</dbReference>
<dbReference type="InterPro" id="IPR022664">
    <property type="entry name" value="DapB_N_CS"/>
</dbReference>
<dbReference type="InterPro" id="IPR023940">
    <property type="entry name" value="DHDPR_bac"/>
</dbReference>
<dbReference type="InterPro" id="IPR036291">
    <property type="entry name" value="NAD(P)-bd_dom_sf"/>
</dbReference>
<dbReference type="NCBIfam" id="TIGR00036">
    <property type="entry name" value="dapB"/>
    <property type="match status" value="1"/>
</dbReference>
<dbReference type="PANTHER" id="PTHR20836:SF0">
    <property type="entry name" value="4-HYDROXY-TETRAHYDRODIPICOLINATE REDUCTASE 1, CHLOROPLASTIC-RELATED"/>
    <property type="match status" value="1"/>
</dbReference>
<dbReference type="PANTHER" id="PTHR20836">
    <property type="entry name" value="DIHYDRODIPICOLINATE REDUCTASE"/>
    <property type="match status" value="1"/>
</dbReference>
<dbReference type="Pfam" id="PF05173">
    <property type="entry name" value="DapB_C"/>
    <property type="match status" value="1"/>
</dbReference>
<dbReference type="Pfam" id="PF01113">
    <property type="entry name" value="DapB_N"/>
    <property type="match status" value="1"/>
</dbReference>
<dbReference type="PIRSF" id="PIRSF000161">
    <property type="entry name" value="DHPR"/>
    <property type="match status" value="1"/>
</dbReference>
<dbReference type="SUPFAM" id="SSF55347">
    <property type="entry name" value="Glyceraldehyde-3-phosphate dehydrogenase-like, C-terminal domain"/>
    <property type="match status" value="1"/>
</dbReference>
<dbReference type="SUPFAM" id="SSF51735">
    <property type="entry name" value="NAD(P)-binding Rossmann-fold domains"/>
    <property type="match status" value="1"/>
</dbReference>
<dbReference type="PROSITE" id="PS01298">
    <property type="entry name" value="DAPB"/>
    <property type="match status" value="1"/>
</dbReference>
<evidence type="ECO:0000255" key="1">
    <source>
        <dbReference type="HAMAP-Rule" id="MF_00102"/>
    </source>
</evidence>
<evidence type="ECO:0000305" key="2"/>
<keyword id="KW-0028">Amino-acid biosynthesis</keyword>
<keyword id="KW-0963">Cytoplasm</keyword>
<keyword id="KW-0220">Diaminopimelate biosynthesis</keyword>
<keyword id="KW-0457">Lysine biosynthesis</keyword>
<keyword id="KW-0520">NAD</keyword>
<keyword id="KW-0521">NADP</keyword>
<keyword id="KW-0560">Oxidoreductase</keyword>
<protein>
    <recommendedName>
        <fullName evidence="1">4-hydroxy-tetrahydrodipicolinate reductase</fullName>
        <shortName evidence="1">HTPA reductase</shortName>
        <ecNumber evidence="1">1.17.1.8</ecNumber>
    </recommendedName>
</protein>
<reference key="1">
    <citation type="journal article" date="2009" name="J. Bacteriol.">
        <title>Complete genome sequence of Rhodobacter sphaeroides KD131.</title>
        <authorList>
            <person name="Lim S.-K."/>
            <person name="Kim S.J."/>
            <person name="Cha S.H."/>
            <person name="Oh Y.-K."/>
            <person name="Rhee H.-J."/>
            <person name="Kim M.-S."/>
            <person name="Lee J.K."/>
        </authorList>
    </citation>
    <scope>NUCLEOTIDE SEQUENCE [LARGE SCALE GENOMIC DNA]</scope>
    <source>
        <strain>KD131 / KCTC 12085</strain>
    </source>
</reference>